<feature type="initiator methionine" description="Removed" evidence="2">
    <location>
        <position position="1"/>
    </location>
</feature>
<feature type="chain" id="PRO_0000062008" description="Photosystem I iron-sulfur center">
    <location>
        <begin position="2"/>
        <end position="81"/>
    </location>
</feature>
<feature type="domain" description="4Fe-4S ferredoxin-type 1" evidence="1">
    <location>
        <begin position="2"/>
        <end position="31"/>
    </location>
</feature>
<feature type="domain" description="4Fe-4S ferredoxin-type 2" evidence="1">
    <location>
        <begin position="39"/>
        <end position="68"/>
    </location>
</feature>
<feature type="binding site" evidence="1">
    <location>
        <position position="11"/>
    </location>
    <ligand>
        <name>[4Fe-4S] cluster</name>
        <dbReference type="ChEBI" id="CHEBI:49883"/>
        <label>1</label>
    </ligand>
</feature>
<feature type="binding site" evidence="1">
    <location>
        <position position="14"/>
    </location>
    <ligand>
        <name>[4Fe-4S] cluster</name>
        <dbReference type="ChEBI" id="CHEBI:49883"/>
        <label>1</label>
    </ligand>
</feature>
<feature type="binding site" evidence="1">
    <location>
        <position position="17"/>
    </location>
    <ligand>
        <name>[4Fe-4S] cluster</name>
        <dbReference type="ChEBI" id="CHEBI:49883"/>
        <label>1</label>
    </ligand>
</feature>
<feature type="binding site" evidence="1">
    <location>
        <position position="21"/>
    </location>
    <ligand>
        <name>[4Fe-4S] cluster</name>
        <dbReference type="ChEBI" id="CHEBI:49883"/>
        <label>2</label>
    </ligand>
</feature>
<feature type="binding site" evidence="1">
    <location>
        <position position="48"/>
    </location>
    <ligand>
        <name>[4Fe-4S] cluster</name>
        <dbReference type="ChEBI" id="CHEBI:49883"/>
        <label>2</label>
    </ligand>
</feature>
<feature type="binding site" evidence="1">
    <location>
        <position position="51"/>
    </location>
    <ligand>
        <name>[4Fe-4S] cluster</name>
        <dbReference type="ChEBI" id="CHEBI:49883"/>
        <label>2</label>
    </ligand>
</feature>
<feature type="binding site" evidence="1">
    <location>
        <position position="54"/>
    </location>
    <ligand>
        <name>[4Fe-4S] cluster</name>
        <dbReference type="ChEBI" id="CHEBI:49883"/>
        <label>2</label>
    </ligand>
</feature>
<feature type="binding site" evidence="1">
    <location>
        <position position="58"/>
    </location>
    <ligand>
        <name>[4Fe-4S] cluster</name>
        <dbReference type="ChEBI" id="CHEBI:49883"/>
        <label>1</label>
    </ligand>
</feature>
<feature type="strand" evidence="3">
    <location>
        <begin position="4"/>
        <end position="8"/>
    </location>
</feature>
<feature type="helix" evidence="3">
    <location>
        <begin position="16"/>
        <end position="20"/>
    </location>
</feature>
<feature type="strand" evidence="3">
    <location>
        <begin position="27"/>
        <end position="30"/>
    </location>
</feature>
<feature type="strand" evidence="3">
    <location>
        <begin position="32"/>
        <end position="34"/>
    </location>
</feature>
<feature type="strand" evidence="3">
    <location>
        <begin position="38"/>
        <end position="41"/>
    </location>
</feature>
<feature type="helix" evidence="3">
    <location>
        <begin position="45"/>
        <end position="47"/>
    </location>
</feature>
<feature type="helix" evidence="3">
    <location>
        <begin position="53"/>
        <end position="57"/>
    </location>
</feature>
<feature type="strand" evidence="3">
    <location>
        <begin position="60"/>
        <end position="62"/>
    </location>
</feature>
<feature type="strand" evidence="3">
    <location>
        <begin position="64"/>
        <end position="68"/>
    </location>
</feature>
<feature type="turn" evidence="3">
    <location>
        <begin position="74"/>
        <end position="78"/>
    </location>
</feature>
<reference key="1">
    <citation type="journal article" date="1992" name="Plant Mol. Biol.">
        <title>Nucleotide sequence and expression of the gene for the 9 kDa FA/FB component of photosystem I from the cyanobacterium Anabaena sp. PCC7120.</title>
        <authorList>
            <person name="Mulligan M.E."/>
            <person name="Jackman D.M."/>
        </authorList>
    </citation>
    <scope>NUCLEOTIDE SEQUENCE [GENOMIC DNA]</scope>
</reference>
<reference key="2">
    <citation type="journal article" date="2001" name="DNA Res.">
        <title>Complete genomic sequence of the filamentous nitrogen-fixing cyanobacterium Anabaena sp. strain PCC 7120.</title>
        <authorList>
            <person name="Kaneko T."/>
            <person name="Nakamura Y."/>
            <person name="Wolk C.P."/>
            <person name="Kuritz T."/>
            <person name="Sasamoto S."/>
            <person name="Watanabe A."/>
            <person name="Iriguchi M."/>
            <person name="Ishikawa A."/>
            <person name="Kawashima K."/>
            <person name="Kimura T."/>
            <person name="Kishida Y."/>
            <person name="Kohara M."/>
            <person name="Matsumoto M."/>
            <person name="Matsuno A."/>
            <person name="Muraki A."/>
            <person name="Nakazaki N."/>
            <person name="Shimpo S."/>
            <person name="Sugimoto M."/>
            <person name="Takazawa M."/>
            <person name="Yamada M."/>
            <person name="Yasuda M."/>
            <person name="Tabata S."/>
        </authorList>
    </citation>
    <scope>NUCLEOTIDE SEQUENCE [LARGE SCALE GENOMIC DNA]</scope>
    <source>
        <strain>PCC 7120 / SAG 25.82 / UTEX 2576</strain>
    </source>
</reference>
<reference key="3">
    <citation type="journal article" date="2014" name="Proc. Natl. Acad. Sci. U.S.A.">
        <title>Attachment of phycobilisomes in an antenna-photosystem I supercomplex of cyanobacteria.</title>
        <authorList>
            <person name="Watanabe M."/>
            <person name="Semchonok D.A."/>
            <person name="Webber-Birungi M.T."/>
            <person name="Ehira S."/>
            <person name="Kondo K."/>
            <person name="Narikawa R."/>
            <person name="Ohmori M."/>
            <person name="Boekema E.J."/>
            <person name="Ikeuchi M."/>
        </authorList>
    </citation>
    <scope>PROTEIN SEQUENCE OF 2-16</scope>
    <scope>SUBUNIT</scope>
    <scope>SUBCELLULAR LOCATION</scope>
    <source>
        <strain>PCC 7120 / SAG 25.82 / UTEX 2576</strain>
    </source>
</reference>
<protein>
    <recommendedName>
        <fullName evidence="1">Photosystem I iron-sulfur center</fullName>
        <ecNumber evidence="1">1.97.1.12</ecNumber>
    </recommendedName>
    <alternativeName>
        <fullName evidence="1">9 kDa polypeptide</fullName>
    </alternativeName>
    <alternativeName>
        <fullName evidence="1">PSI-C</fullName>
    </alternativeName>
    <alternativeName>
        <fullName evidence="1">Photosystem I subunit VII</fullName>
    </alternativeName>
    <alternativeName>
        <fullName evidence="1">PsaC</fullName>
    </alternativeName>
</protein>
<proteinExistence type="evidence at protein level"/>
<keyword id="KW-0002">3D-structure</keyword>
<keyword id="KW-0004">4Fe-4S</keyword>
<keyword id="KW-0903">Direct protein sequencing</keyword>
<keyword id="KW-0249">Electron transport</keyword>
<keyword id="KW-0408">Iron</keyword>
<keyword id="KW-0411">Iron-sulfur</keyword>
<keyword id="KW-0472">Membrane</keyword>
<keyword id="KW-0479">Metal-binding</keyword>
<keyword id="KW-0560">Oxidoreductase</keyword>
<keyword id="KW-0602">Photosynthesis</keyword>
<keyword id="KW-0603">Photosystem I</keyword>
<keyword id="KW-1185">Reference proteome</keyword>
<keyword id="KW-0677">Repeat</keyword>
<keyword id="KW-0793">Thylakoid</keyword>
<keyword id="KW-0813">Transport</keyword>
<name>PSAC_NOSS1</name>
<organism>
    <name type="scientific">Nostoc sp. (strain PCC 7120 / SAG 25.82 / UTEX 2576)</name>
    <dbReference type="NCBI Taxonomy" id="103690"/>
    <lineage>
        <taxon>Bacteria</taxon>
        <taxon>Bacillati</taxon>
        <taxon>Cyanobacteriota</taxon>
        <taxon>Cyanophyceae</taxon>
        <taxon>Nostocales</taxon>
        <taxon>Nostocaceae</taxon>
        <taxon>Nostoc</taxon>
    </lineage>
</organism>
<comment type="function">
    <text evidence="1">Apoprotein for the two 4Fe-4S centers FA and FB of photosystem I (PSI); essential for photochemical activity. FB is the terminal electron acceptor of PSI, donating electrons to ferredoxin. The C-terminus interacts with PsaA/B/D and helps assemble the protein into the PSI complex. Required for binding of PsaD and PsaE to PSI. PSI is a plastocyanin/cytochrome c6-ferredoxin oxidoreductase, converting photonic excitation into a charge separation, which transfers an electron from the donor P700 chlorophyll pair to the spectroscopically characterized acceptors A0, A1, FX, FA and FB in turn.</text>
</comment>
<comment type="catalytic activity">
    <reaction evidence="1">
        <text>reduced [plastocyanin] + hnu + oxidized [2Fe-2S]-[ferredoxin] = oxidized [plastocyanin] + reduced [2Fe-2S]-[ferredoxin]</text>
        <dbReference type="Rhea" id="RHEA:30407"/>
        <dbReference type="Rhea" id="RHEA-COMP:10000"/>
        <dbReference type="Rhea" id="RHEA-COMP:10001"/>
        <dbReference type="Rhea" id="RHEA-COMP:10039"/>
        <dbReference type="Rhea" id="RHEA-COMP:10040"/>
        <dbReference type="ChEBI" id="CHEBI:29036"/>
        <dbReference type="ChEBI" id="CHEBI:30212"/>
        <dbReference type="ChEBI" id="CHEBI:33737"/>
        <dbReference type="ChEBI" id="CHEBI:33738"/>
        <dbReference type="ChEBI" id="CHEBI:49552"/>
        <dbReference type="EC" id="1.97.1.12"/>
    </reaction>
</comment>
<comment type="cofactor">
    <cofactor evidence="1">
        <name>[4Fe-4S] cluster</name>
        <dbReference type="ChEBI" id="CHEBI:49883"/>
    </cofactor>
    <text evidence="1">Binds 2 [4Fe-4S] clusters. Cluster 2 is most probably the spectroscopically characterized electron acceptor FA and cluster 1 is most probably FB.</text>
</comment>
<comment type="subunit">
    <text evidence="2">The cyanobacterial PSI reaction center is composed of one copy each of PsaA,B,C,D,E,F,I,J,K,L,M and X, and forms dimeric and tetrameric complexes.</text>
</comment>
<comment type="subcellular location">
    <subcellularLocation>
        <location evidence="1 2">Cellular thylakoid membrane</location>
        <topology evidence="1">Peripheral membrane protein</topology>
        <orientation evidence="1">Cytoplasmic side</orientation>
    </subcellularLocation>
</comment>
<evidence type="ECO:0000255" key="1">
    <source>
        <dbReference type="HAMAP-Rule" id="MF_01303"/>
    </source>
</evidence>
<evidence type="ECO:0000269" key="2">
    <source>
    </source>
</evidence>
<evidence type="ECO:0007829" key="3">
    <source>
        <dbReference type="PDB" id="6K61"/>
    </source>
</evidence>
<accession>P0A410</accession>
<accession>P23392</accession>
<accession>P31086</accession>
<dbReference type="EC" id="1.97.1.12" evidence="1"/>
<dbReference type="EMBL" id="X61369">
    <property type="protein sequence ID" value="CAA43645.1"/>
    <property type="molecule type" value="Genomic_DNA"/>
</dbReference>
<dbReference type="EMBL" id="BA000019">
    <property type="protein sequence ID" value="BAB75162.1"/>
    <property type="molecule type" value="Genomic_DNA"/>
</dbReference>
<dbReference type="PIR" id="AH2238">
    <property type="entry name" value="AH2238"/>
</dbReference>
<dbReference type="PIR" id="S20851">
    <property type="entry name" value="FEAI1C"/>
</dbReference>
<dbReference type="RefSeq" id="WP_010997613.1">
    <property type="nucleotide sequence ID" value="NZ_RSCN01000015.1"/>
</dbReference>
<dbReference type="PDB" id="6JEO">
    <property type="method" value="EM"/>
    <property type="resolution" value="3.30 A"/>
    <property type="chains" value="aC/bC/cC/dC=1-81"/>
</dbReference>
<dbReference type="PDB" id="6K61">
    <property type="method" value="EM"/>
    <property type="resolution" value="2.37 A"/>
    <property type="chains" value="C/c=1-81"/>
</dbReference>
<dbReference type="PDB" id="6TCL">
    <property type="method" value="EM"/>
    <property type="resolution" value="3.20 A"/>
    <property type="chains" value="C/C1/C2/CC=2-81"/>
</dbReference>
<dbReference type="PDB" id="7Y3F">
    <property type="method" value="EM"/>
    <property type="resolution" value="2.62 A"/>
    <property type="chains" value="C=1-81"/>
</dbReference>
<dbReference type="PDBsum" id="6JEO"/>
<dbReference type="PDBsum" id="6K61"/>
<dbReference type="PDBsum" id="6TCL"/>
<dbReference type="PDBsum" id="7Y3F"/>
<dbReference type="EMDB" id="EMD-10461"/>
<dbReference type="EMDB" id="EMD-33593"/>
<dbReference type="EMDB" id="EMD-9807"/>
<dbReference type="EMDB" id="EMD-9918"/>
<dbReference type="SMR" id="P0A410"/>
<dbReference type="STRING" id="103690.gene:10495502"/>
<dbReference type="GeneID" id="58726273"/>
<dbReference type="KEGG" id="ana:asr3463"/>
<dbReference type="eggNOG" id="COG1143">
    <property type="taxonomic scope" value="Bacteria"/>
</dbReference>
<dbReference type="OrthoDB" id="9804603at2"/>
<dbReference type="Proteomes" id="UP000002483">
    <property type="component" value="Chromosome"/>
</dbReference>
<dbReference type="GO" id="GO:0009522">
    <property type="term" value="C:photosystem I"/>
    <property type="evidence" value="ECO:0007669"/>
    <property type="project" value="UniProtKB-KW"/>
</dbReference>
<dbReference type="GO" id="GO:0031676">
    <property type="term" value="C:plasma membrane-derived thylakoid membrane"/>
    <property type="evidence" value="ECO:0007669"/>
    <property type="project" value="UniProtKB-SubCell"/>
</dbReference>
<dbReference type="GO" id="GO:0051539">
    <property type="term" value="F:4 iron, 4 sulfur cluster binding"/>
    <property type="evidence" value="ECO:0007669"/>
    <property type="project" value="UniProtKB-KW"/>
</dbReference>
<dbReference type="GO" id="GO:0009055">
    <property type="term" value="F:electron transfer activity"/>
    <property type="evidence" value="ECO:0007669"/>
    <property type="project" value="UniProtKB-UniRule"/>
</dbReference>
<dbReference type="GO" id="GO:0046872">
    <property type="term" value="F:metal ion binding"/>
    <property type="evidence" value="ECO:0007669"/>
    <property type="project" value="UniProtKB-KW"/>
</dbReference>
<dbReference type="GO" id="GO:0016491">
    <property type="term" value="F:oxidoreductase activity"/>
    <property type="evidence" value="ECO:0007669"/>
    <property type="project" value="UniProtKB-KW"/>
</dbReference>
<dbReference type="GO" id="GO:0009773">
    <property type="term" value="P:photosynthetic electron transport in photosystem I"/>
    <property type="evidence" value="ECO:0007669"/>
    <property type="project" value="InterPro"/>
</dbReference>
<dbReference type="FunFam" id="3.30.70.20:FF:000001">
    <property type="entry name" value="Photosystem I iron-sulfur center"/>
    <property type="match status" value="1"/>
</dbReference>
<dbReference type="Gene3D" id="3.30.70.20">
    <property type="match status" value="1"/>
</dbReference>
<dbReference type="HAMAP" id="MF_01303">
    <property type="entry name" value="PSI_PsaC"/>
    <property type="match status" value="1"/>
</dbReference>
<dbReference type="InterPro" id="IPR017896">
    <property type="entry name" value="4Fe4S_Fe-S-bd"/>
</dbReference>
<dbReference type="InterPro" id="IPR017900">
    <property type="entry name" value="4Fe4S_Fe_S_CS"/>
</dbReference>
<dbReference type="InterPro" id="IPR050157">
    <property type="entry name" value="PSI_iron-sulfur_center"/>
</dbReference>
<dbReference type="InterPro" id="IPR017491">
    <property type="entry name" value="PSI_PsaC"/>
</dbReference>
<dbReference type="NCBIfam" id="TIGR03048">
    <property type="entry name" value="PS_I_psaC"/>
    <property type="match status" value="1"/>
</dbReference>
<dbReference type="PANTHER" id="PTHR24960:SF79">
    <property type="entry name" value="PHOTOSYSTEM I IRON-SULFUR CENTER"/>
    <property type="match status" value="1"/>
</dbReference>
<dbReference type="PANTHER" id="PTHR24960">
    <property type="entry name" value="PHOTOSYSTEM I IRON-SULFUR CENTER-RELATED"/>
    <property type="match status" value="1"/>
</dbReference>
<dbReference type="Pfam" id="PF12838">
    <property type="entry name" value="Fer4_7"/>
    <property type="match status" value="1"/>
</dbReference>
<dbReference type="SUPFAM" id="SSF54862">
    <property type="entry name" value="4Fe-4S ferredoxins"/>
    <property type="match status" value="1"/>
</dbReference>
<dbReference type="PROSITE" id="PS00198">
    <property type="entry name" value="4FE4S_FER_1"/>
    <property type="match status" value="2"/>
</dbReference>
<dbReference type="PROSITE" id="PS51379">
    <property type="entry name" value="4FE4S_FER_2"/>
    <property type="match status" value="2"/>
</dbReference>
<sequence length="81" mass="8816">MSHTVKIYDTCIGCTQCVRACPTDVLEMVPWDGCKAAQVASSPRTEDCVGCKRCETACPTDFLSIRVYLGAETTRSMGLAY</sequence>
<gene>
    <name evidence="1" type="primary">psaC</name>
    <name type="ordered locus">asr3463</name>
</gene>